<gene>
    <name evidence="1" type="primary">thrS</name>
    <name type="ordered locus">FTW_0612</name>
</gene>
<proteinExistence type="inferred from homology"/>
<comment type="function">
    <text evidence="1">Catalyzes the attachment of threonine to tRNA(Thr) in a two-step reaction: L-threonine is first activated by ATP to form Thr-AMP and then transferred to the acceptor end of tRNA(Thr). Also edits incorrectly charged L-seryl-tRNA(Thr).</text>
</comment>
<comment type="catalytic activity">
    <reaction evidence="1">
        <text>tRNA(Thr) + L-threonine + ATP = L-threonyl-tRNA(Thr) + AMP + diphosphate + H(+)</text>
        <dbReference type="Rhea" id="RHEA:24624"/>
        <dbReference type="Rhea" id="RHEA-COMP:9670"/>
        <dbReference type="Rhea" id="RHEA-COMP:9704"/>
        <dbReference type="ChEBI" id="CHEBI:15378"/>
        <dbReference type="ChEBI" id="CHEBI:30616"/>
        <dbReference type="ChEBI" id="CHEBI:33019"/>
        <dbReference type="ChEBI" id="CHEBI:57926"/>
        <dbReference type="ChEBI" id="CHEBI:78442"/>
        <dbReference type="ChEBI" id="CHEBI:78534"/>
        <dbReference type="ChEBI" id="CHEBI:456215"/>
        <dbReference type="EC" id="6.1.1.3"/>
    </reaction>
</comment>
<comment type="cofactor">
    <cofactor evidence="1">
        <name>Zn(2+)</name>
        <dbReference type="ChEBI" id="CHEBI:29105"/>
    </cofactor>
    <text evidence="1">Binds 1 zinc ion per subunit.</text>
</comment>
<comment type="subunit">
    <text evidence="1">Homodimer.</text>
</comment>
<comment type="subcellular location">
    <subcellularLocation>
        <location evidence="1">Cytoplasm</location>
    </subcellularLocation>
</comment>
<comment type="similarity">
    <text evidence="1">Belongs to the class-II aminoacyl-tRNA synthetase family.</text>
</comment>
<protein>
    <recommendedName>
        <fullName evidence="1">Threonine--tRNA ligase</fullName>
        <ecNumber evidence="1">6.1.1.3</ecNumber>
    </recommendedName>
    <alternativeName>
        <fullName evidence="1">Threonyl-tRNA synthetase</fullName>
        <shortName evidence="1">ThrRS</shortName>
    </alternativeName>
</protein>
<keyword id="KW-0030">Aminoacyl-tRNA synthetase</keyword>
<keyword id="KW-0067">ATP-binding</keyword>
<keyword id="KW-0963">Cytoplasm</keyword>
<keyword id="KW-0436">Ligase</keyword>
<keyword id="KW-0479">Metal-binding</keyword>
<keyword id="KW-0547">Nucleotide-binding</keyword>
<keyword id="KW-0648">Protein biosynthesis</keyword>
<keyword id="KW-0694">RNA-binding</keyword>
<keyword id="KW-0820">tRNA-binding</keyword>
<keyword id="KW-0862">Zinc</keyword>
<dbReference type="EC" id="6.1.1.3" evidence="1"/>
<dbReference type="EMBL" id="CP000608">
    <property type="protein sequence ID" value="ABO46520.1"/>
    <property type="molecule type" value="Genomic_DNA"/>
</dbReference>
<dbReference type="RefSeq" id="WP_003025542.1">
    <property type="nucleotide sequence ID" value="NC_009257.1"/>
</dbReference>
<dbReference type="SMR" id="A4IX68"/>
<dbReference type="KEGG" id="ftw:FTW_0612"/>
<dbReference type="HOGENOM" id="CLU_008554_0_1_6"/>
<dbReference type="GO" id="GO:0005737">
    <property type="term" value="C:cytoplasm"/>
    <property type="evidence" value="ECO:0007669"/>
    <property type="project" value="UniProtKB-SubCell"/>
</dbReference>
<dbReference type="GO" id="GO:0005524">
    <property type="term" value="F:ATP binding"/>
    <property type="evidence" value="ECO:0007669"/>
    <property type="project" value="UniProtKB-UniRule"/>
</dbReference>
<dbReference type="GO" id="GO:0046872">
    <property type="term" value="F:metal ion binding"/>
    <property type="evidence" value="ECO:0007669"/>
    <property type="project" value="UniProtKB-KW"/>
</dbReference>
<dbReference type="GO" id="GO:0004829">
    <property type="term" value="F:threonine-tRNA ligase activity"/>
    <property type="evidence" value="ECO:0007669"/>
    <property type="project" value="UniProtKB-UniRule"/>
</dbReference>
<dbReference type="GO" id="GO:0000049">
    <property type="term" value="F:tRNA binding"/>
    <property type="evidence" value="ECO:0007669"/>
    <property type="project" value="UniProtKB-KW"/>
</dbReference>
<dbReference type="GO" id="GO:0006435">
    <property type="term" value="P:threonyl-tRNA aminoacylation"/>
    <property type="evidence" value="ECO:0007669"/>
    <property type="project" value="UniProtKB-UniRule"/>
</dbReference>
<dbReference type="CDD" id="cd01667">
    <property type="entry name" value="TGS_ThrRS"/>
    <property type="match status" value="1"/>
</dbReference>
<dbReference type="CDD" id="cd00860">
    <property type="entry name" value="ThrRS_anticodon"/>
    <property type="match status" value="1"/>
</dbReference>
<dbReference type="CDD" id="cd00771">
    <property type="entry name" value="ThrRS_core"/>
    <property type="match status" value="1"/>
</dbReference>
<dbReference type="FunFam" id="3.10.20.30:FF:000005">
    <property type="entry name" value="Threonine--tRNA ligase"/>
    <property type="match status" value="1"/>
</dbReference>
<dbReference type="FunFam" id="3.30.54.20:FF:000002">
    <property type="entry name" value="Threonine--tRNA ligase"/>
    <property type="match status" value="1"/>
</dbReference>
<dbReference type="FunFam" id="3.30.930.10:FF:000002">
    <property type="entry name" value="Threonine--tRNA ligase"/>
    <property type="match status" value="1"/>
</dbReference>
<dbReference type="FunFam" id="3.40.50.800:FF:000001">
    <property type="entry name" value="Threonine--tRNA ligase"/>
    <property type="match status" value="1"/>
</dbReference>
<dbReference type="FunFam" id="3.30.980.10:FF:000005">
    <property type="entry name" value="Threonyl-tRNA synthetase, mitochondrial"/>
    <property type="match status" value="1"/>
</dbReference>
<dbReference type="Gene3D" id="3.10.20.30">
    <property type="match status" value="1"/>
</dbReference>
<dbReference type="Gene3D" id="3.30.54.20">
    <property type="match status" value="1"/>
</dbReference>
<dbReference type="Gene3D" id="3.40.50.800">
    <property type="entry name" value="Anticodon-binding domain"/>
    <property type="match status" value="1"/>
</dbReference>
<dbReference type="Gene3D" id="3.30.930.10">
    <property type="entry name" value="Bira Bifunctional Protein, Domain 2"/>
    <property type="match status" value="1"/>
</dbReference>
<dbReference type="Gene3D" id="3.30.980.10">
    <property type="entry name" value="Threonyl-trna Synthetase, Chain A, domain 2"/>
    <property type="match status" value="1"/>
</dbReference>
<dbReference type="HAMAP" id="MF_00184">
    <property type="entry name" value="Thr_tRNA_synth"/>
    <property type="match status" value="1"/>
</dbReference>
<dbReference type="InterPro" id="IPR002314">
    <property type="entry name" value="aa-tRNA-synt_IIb"/>
</dbReference>
<dbReference type="InterPro" id="IPR006195">
    <property type="entry name" value="aa-tRNA-synth_II"/>
</dbReference>
<dbReference type="InterPro" id="IPR045864">
    <property type="entry name" value="aa-tRNA-synth_II/BPL/LPL"/>
</dbReference>
<dbReference type="InterPro" id="IPR004154">
    <property type="entry name" value="Anticodon-bd"/>
</dbReference>
<dbReference type="InterPro" id="IPR036621">
    <property type="entry name" value="Anticodon-bd_dom_sf"/>
</dbReference>
<dbReference type="InterPro" id="IPR012675">
    <property type="entry name" value="Beta-grasp_dom_sf"/>
</dbReference>
<dbReference type="InterPro" id="IPR004095">
    <property type="entry name" value="TGS"/>
</dbReference>
<dbReference type="InterPro" id="IPR012676">
    <property type="entry name" value="TGS-like"/>
</dbReference>
<dbReference type="InterPro" id="IPR002320">
    <property type="entry name" value="Thr-tRNA-ligase_IIa"/>
</dbReference>
<dbReference type="InterPro" id="IPR018163">
    <property type="entry name" value="Thr/Ala-tRNA-synth_IIc_edit"/>
</dbReference>
<dbReference type="InterPro" id="IPR047246">
    <property type="entry name" value="ThrRS_anticodon"/>
</dbReference>
<dbReference type="InterPro" id="IPR033728">
    <property type="entry name" value="ThrRS_core"/>
</dbReference>
<dbReference type="InterPro" id="IPR012947">
    <property type="entry name" value="tRNA_SAD"/>
</dbReference>
<dbReference type="NCBIfam" id="TIGR00418">
    <property type="entry name" value="thrS"/>
    <property type="match status" value="1"/>
</dbReference>
<dbReference type="PANTHER" id="PTHR11451:SF44">
    <property type="entry name" value="THREONINE--TRNA LIGASE, CHLOROPLASTIC_MITOCHONDRIAL 2"/>
    <property type="match status" value="1"/>
</dbReference>
<dbReference type="PANTHER" id="PTHR11451">
    <property type="entry name" value="THREONINE-TRNA LIGASE"/>
    <property type="match status" value="1"/>
</dbReference>
<dbReference type="Pfam" id="PF03129">
    <property type="entry name" value="HGTP_anticodon"/>
    <property type="match status" value="1"/>
</dbReference>
<dbReference type="Pfam" id="PF02824">
    <property type="entry name" value="TGS"/>
    <property type="match status" value="1"/>
</dbReference>
<dbReference type="Pfam" id="PF00587">
    <property type="entry name" value="tRNA-synt_2b"/>
    <property type="match status" value="1"/>
</dbReference>
<dbReference type="Pfam" id="PF07973">
    <property type="entry name" value="tRNA_SAD"/>
    <property type="match status" value="1"/>
</dbReference>
<dbReference type="PRINTS" id="PR01047">
    <property type="entry name" value="TRNASYNTHTHR"/>
</dbReference>
<dbReference type="SMART" id="SM00863">
    <property type="entry name" value="tRNA_SAD"/>
    <property type="match status" value="1"/>
</dbReference>
<dbReference type="SUPFAM" id="SSF52954">
    <property type="entry name" value="Class II aaRS ABD-related"/>
    <property type="match status" value="1"/>
</dbReference>
<dbReference type="SUPFAM" id="SSF55681">
    <property type="entry name" value="Class II aaRS and biotin synthetases"/>
    <property type="match status" value="1"/>
</dbReference>
<dbReference type="SUPFAM" id="SSF81271">
    <property type="entry name" value="TGS-like"/>
    <property type="match status" value="1"/>
</dbReference>
<dbReference type="SUPFAM" id="SSF55186">
    <property type="entry name" value="ThrRS/AlaRS common domain"/>
    <property type="match status" value="1"/>
</dbReference>
<dbReference type="PROSITE" id="PS50862">
    <property type="entry name" value="AA_TRNA_LIGASE_II"/>
    <property type="match status" value="1"/>
</dbReference>
<dbReference type="PROSITE" id="PS51880">
    <property type="entry name" value="TGS"/>
    <property type="match status" value="1"/>
</dbReference>
<evidence type="ECO:0000255" key="1">
    <source>
        <dbReference type="HAMAP-Rule" id="MF_00184"/>
    </source>
</evidence>
<evidence type="ECO:0000255" key="2">
    <source>
        <dbReference type="PROSITE-ProRule" id="PRU01228"/>
    </source>
</evidence>
<name>SYT_FRATW</name>
<reference key="1">
    <citation type="journal article" date="2007" name="PLoS ONE">
        <title>Complete genomic characterization of a pathogenic A.II strain of Francisella tularensis subspecies tularensis.</title>
        <authorList>
            <person name="Beckstrom-Sternberg S.M."/>
            <person name="Auerbach R.K."/>
            <person name="Godbole S."/>
            <person name="Pearson J.V."/>
            <person name="Beckstrom-Sternberg J.S."/>
            <person name="Deng Z."/>
            <person name="Munk C."/>
            <person name="Kubota K."/>
            <person name="Zhou Y."/>
            <person name="Bruce D."/>
            <person name="Noronha J."/>
            <person name="Scheuermann R.H."/>
            <person name="Wang A."/>
            <person name="Wei X."/>
            <person name="Wang J."/>
            <person name="Hao J."/>
            <person name="Wagner D.M."/>
            <person name="Brettin T.S."/>
            <person name="Brown N."/>
            <person name="Gilna P."/>
            <person name="Keim P.S."/>
        </authorList>
    </citation>
    <scope>NUCLEOTIDE SEQUENCE [LARGE SCALE GENOMIC DNA]</scope>
    <source>
        <strain>WY96-3418</strain>
    </source>
</reference>
<organism>
    <name type="scientific">Francisella tularensis subsp. tularensis (strain WY96-3418)</name>
    <dbReference type="NCBI Taxonomy" id="418136"/>
    <lineage>
        <taxon>Bacteria</taxon>
        <taxon>Pseudomonadati</taxon>
        <taxon>Pseudomonadota</taxon>
        <taxon>Gammaproteobacteria</taxon>
        <taxon>Thiotrichales</taxon>
        <taxon>Francisellaceae</taxon>
        <taxon>Francisella</taxon>
    </lineage>
</organism>
<feature type="chain" id="PRO_1000020395" description="Threonine--tRNA ligase">
    <location>
        <begin position="1"/>
        <end position="634"/>
    </location>
</feature>
<feature type="domain" description="TGS" evidence="2">
    <location>
        <begin position="1"/>
        <end position="61"/>
    </location>
</feature>
<feature type="region of interest" description="Catalytic" evidence="1">
    <location>
        <begin position="241"/>
        <end position="532"/>
    </location>
</feature>
<feature type="binding site" evidence="1">
    <location>
        <position position="332"/>
    </location>
    <ligand>
        <name>Zn(2+)</name>
        <dbReference type="ChEBI" id="CHEBI:29105"/>
    </ligand>
</feature>
<feature type="binding site" evidence="1">
    <location>
        <position position="383"/>
    </location>
    <ligand>
        <name>Zn(2+)</name>
        <dbReference type="ChEBI" id="CHEBI:29105"/>
    </ligand>
</feature>
<feature type="binding site" evidence="1">
    <location>
        <position position="509"/>
    </location>
    <ligand>
        <name>Zn(2+)</name>
        <dbReference type="ChEBI" id="CHEBI:29105"/>
    </ligand>
</feature>
<accession>A4IX68</accession>
<sequence length="634" mass="72390">MINIRFPDGSIREFEAGVNSLDVAKSISPSLAKATMAAYIDDQLKDAKDAINSNCELRLITVKDPEGLEILRHSCAHLLAHAVKELYPNTEVTIGPVVDNGFYYDFSFKESIGEADLPTIEKKMKELAKKSAPVSYRVVPKAEAIEFFKAQGENYKVEIIDSIADEQMKIYTQDNFSDLCRGPHIPNTSVLKAFKLTKLAGAYWRGNSDNEMLTRIYGTCWATKEDLEQYLNMLEEAEKRDHRKIGKVLDLFHFQEDSPGIAFWHDNGVRIWRQVEDYMRASNNKYGCSEIRTPLIADFSLWQKSGHASKYAENMFATKSENRDFAIRPMNCPTCVQVYNTKLHSYRDLPIRMAEFGIVHRNEPSGSLHGLLRVRSFTQDDGHIFCTPEQVEEEVILMVQQCFEVYKDFGFNDFAIKIALRPENRIGDDETWDKSEQMLKNALDANNVSYELLPGEGAFYGPKIEFHLKDAIGRSWQCGTIQLDFSMPQRLGATYIDKNGEKQVPVMLHRAIVGSLERFIGMLIEHYAGNLPLWLAPVQVAVMGISNNQDDYCKEVFIMLEKNGIRAKLDLRNEKIGFKIREHTLLRVPYLVILGKNEQEQKIITIRKHSGEDLGQMSVDDFCAFLDKQIQAKE</sequence>